<feature type="chain" id="PRO_1000083243" description="Protein SlyX">
    <location>
        <begin position="1"/>
        <end position="72"/>
    </location>
</feature>
<feature type="region of interest" description="Disordered" evidence="2">
    <location>
        <begin position="53"/>
        <end position="72"/>
    </location>
</feature>
<feature type="compositionally biased region" description="Polar residues" evidence="2">
    <location>
        <begin position="55"/>
        <end position="65"/>
    </location>
</feature>
<sequence length="72" mass="8260">MQDITMEARLAELESRLAFQEITIEELNLTVTAHEMEMAKLRDHLRLLTEKLKASQPSNIASQAEETPPPHY</sequence>
<evidence type="ECO:0000255" key="1">
    <source>
        <dbReference type="HAMAP-Rule" id="MF_00715"/>
    </source>
</evidence>
<evidence type="ECO:0000256" key="2">
    <source>
        <dbReference type="SAM" id="MobiDB-lite"/>
    </source>
</evidence>
<gene>
    <name evidence="1" type="primary">slyX</name>
    <name type="ordered locus">SARI_04172</name>
</gene>
<protein>
    <recommendedName>
        <fullName evidence="1">Protein SlyX</fullName>
    </recommendedName>
</protein>
<comment type="similarity">
    <text evidence="1">Belongs to the SlyX family.</text>
</comment>
<name>SLYX_SALAR</name>
<keyword id="KW-1185">Reference proteome</keyword>
<organism>
    <name type="scientific">Salmonella arizonae (strain ATCC BAA-731 / CDC346-86 / RSK2980)</name>
    <dbReference type="NCBI Taxonomy" id="41514"/>
    <lineage>
        <taxon>Bacteria</taxon>
        <taxon>Pseudomonadati</taxon>
        <taxon>Pseudomonadota</taxon>
        <taxon>Gammaproteobacteria</taxon>
        <taxon>Enterobacterales</taxon>
        <taxon>Enterobacteriaceae</taxon>
        <taxon>Salmonella</taxon>
    </lineage>
</organism>
<reference key="1">
    <citation type="submission" date="2007-11" db="EMBL/GenBank/DDBJ databases">
        <authorList>
            <consortium name="The Salmonella enterica serovar Arizonae Genome Sequencing Project"/>
            <person name="McClelland M."/>
            <person name="Sanderson E.K."/>
            <person name="Porwollik S."/>
            <person name="Spieth J."/>
            <person name="Clifton W.S."/>
            <person name="Fulton R."/>
            <person name="Chunyan W."/>
            <person name="Wollam A."/>
            <person name="Shah N."/>
            <person name="Pepin K."/>
            <person name="Bhonagiri V."/>
            <person name="Nash W."/>
            <person name="Johnson M."/>
            <person name="Thiruvilangam P."/>
            <person name="Wilson R."/>
        </authorList>
    </citation>
    <scope>NUCLEOTIDE SEQUENCE [LARGE SCALE GENOMIC DNA]</scope>
    <source>
        <strain>ATCC BAA-731 / CDC346-86 / RSK2980</strain>
    </source>
</reference>
<proteinExistence type="inferred from homology"/>
<dbReference type="EMBL" id="CP000880">
    <property type="protein sequence ID" value="ABX23961.1"/>
    <property type="molecule type" value="Genomic_DNA"/>
</dbReference>
<dbReference type="SMR" id="A9MN31"/>
<dbReference type="STRING" id="41514.SARI_04172"/>
<dbReference type="KEGG" id="ses:SARI_04172"/>
<dbReference type="HOGENOM" id="CLU_180796_4_2_6"/>
<dbReference type="Proteomes" id="UP000002084">
    <property type="component" value="Chromosome"/>
</dbReference>
<dbReference type="Gene3D" id="1.20.5.300">
    <property type="match status" value="1"/>
</dbReference>
<dbReference type="HAMAP" id="MF_00715">
    <property type="entry name" value="SlyX"/>
    <property type="match status" value="1"/>
</dbReference>
<dbReference type="InterPro" id="IPR007236">
    <property type="entry name" value="SlyX"/>
</dbReference>
<dbReference type="NCBIfam" id="NF002750">
    <property type="entry name" value="PRK02793.1"/>
    <property type="match status" value="1"/>
</dbReference>
<dbReference type="PANTHER" id="PTHR36508">
    <property type="entry name" value="PROTEIN SLYX"/>
    <property type="match status" value="1"/>
</dbReference>
<dbReference type="PANTHER" id="PTHR36508:SF1">
    <property type="entry name" value="PROTEIN SLYX"/>
    <property type="match status" value="1"/>
</dbReference>
<dbReference type="Pfam" id="PF04102">
    <property type="entry name" value="SlyX"/>
    <property type="match status" value="1"/>
</dbReference>
<accession>A9MN31</accession>